<accession>Q9LJW5</accession>
<dbReference type="EMBL" id="AP000386">
    <property type="protein sequence ID" value="BAB02135.1"/>
    <property type="molecule type" value="Genomic_DNA"/>
</dbReference>
<dbReference type="EMBL" id="CP002686">
    <property type="protein sequence ID" value="AEE77506.1"/>
    <property type="molecule type" value="Genomic_DNA"/>
</dbReference>
<dbReference type="EMBL" id="AK221094">
    <property type="protein sequence ID" value="BAD94968.1"/>
    <property type="molecule type" value="mRNA"/>
</dbReference>
<dbReference type="EMBL" id="BT024663">
    <property type="protein sequence ID" value="ABD57488.1"/>
    <property type="molecule type" value="mRNA"/>
</dbReference>
<dbReference type="EMBL" id="AY086885">
    <property type="protein sequence ID" value="AAM63930.1"/>
    <property type="molecule type" value="mRNA"/>
</dbReference>
<dbReference type="RefSeq" id="NP_974373.1">
    <property type="nucleotide sequence ID" value="NM_202644.2"/>
</dbReference>
<dbReference type="BioGRID" id="30503">
    <property type="interactions" value="16"/>
</dbReference>
<dbReference type="FunCoup" id="Q9LJW5">
    <property type="interactions" value="8"/>
</dbReference>
<dbReference type="IntAct" id="Q9LJW5">
    <property type="interactions" value="16"/>
</dbReference>
<dbReference type="STRING" id="3702.Q9LJW5"/>
<dbReference type="iPTMnet" id="Q9LJW5"/>
<dbReference type="PaxDb" id="3702-AT3G28917.1"/>
<dbReference type="ProteomicsDB" id="238319"/>
<dbReference type="EnsemblPlants" id="AT3G28917.1">
    <property type="protein sequence ID" value="AT3G28917.1"/>
    <property type="gene ID" value="AT3G28917"/>
</dbReference>
<dbReference type="GeneID" id="2745896"/>
<dbReference type="Gramene" id="AT3G28917.1">
    <property type="protein sequence ID" value="AT3G28917.1"/>
    <property type="gene ID" value="AT3G28917"/>
</dbReference>
<dbReference type="KEGG" id="ath:AT3G28917"/>
<dbReference type="Araport" id="AT3G28917"/>
<dbReference type="TAIR" id="AT3G28917">
    <property type="gene designation" value="MIF2"/>
</dbReference>
<dbReference type="eggNOG" id="ENOG502S2AW">
    <property type="taxonomic scope" value="Eukaryota"/>
</dbReference>
<dbReference type="HOGENOM" id="CLU_123565_0_0_1"/>
<dbReference type="InParanoid" id="Q9LJW5"/>
<dbReference type="OMA" id="VCDCSSP"/>
<dbReference type="PhylomeDB" id="Q9LJW5"/>
<dbReference type="PRO" id="PR:Q9LJW5"/>
<dbReference type="Proteomes" id="UP000006548">
    <property type="component" value="Chromosome 3"/>
</dbReference>
<dbReference type="ExpressionAtlas" id="Q9LJW5">
    <property type="expression patterns" value="baseline and differential"/>
</dbReference>
<dbReference type="GO" id="GO:0005737">
    <property type="term" value="C:cytoplasm"/>
    <property type="evidence" value="ECO:0000250"/>
    <property type="project" value="UniProtKB"/>
</dbReference>
<dbReference type="GO" id="GO:0005634">
    <property type="term" value="C:nucleus"/>
    <property type="evidence" value="ECO:0000314"/>
    <property type="project" value="TAIR"/>
</dbReference>
<dbReference type="GO" id="GO:0003677">
    <property type="term" value="F:DNA binding"/>
    <property type="evidence" value="ECO:0000250"/>
    <property type="project" value="TAIR"/>
</dbReference>
<dbReference type="GO" id="GO:0042803">
    <property type="term" value="F:protein homodimerization activity"/>
    <property type="evidence" value="ECO:0000250"/>
    <property type="project" value="UniProtKB"/>
</dbReference>
<dbReference type="GO" id="GO:0008270">
    <property type="term" value="F:zinc ion binding"/>
    <property type="evidence" value="ECO:0007669"/>
    <property type="project" value="UniProtKB-KW"/>
</dbReference>
<dbReference type="GO" id="GO:0010582">
    <property type="term" value="P:floral meristem determinacy"/>
    <property type="evidence" value="ECO:0000315"/>
    <property type="project" value="TAIR"/>
</dbReference>
<dbReference type="GO" id="GO:0035670">
    <property type="term" value="P:plant-type ovary development"/>
    <property type="evidence" value="ECO:0000315"/>
    <property type="project" value="TAIR"/>
</dbReference>
<dbReference type="InterPro" id="IPR006456">
    <property type="entry name" value="ZF_HD_homeobox_Cys/His_dimer"/>
</dbReference>
<dbReference type="NCBIfam" id="TIGR01566">
    <property type="entry name" value="ZF_HD_prot_N"/>
    <property type="match status" value="1"/>
</dbReference>
<dbReference type="PANTHER" id="PTHR31948:SF162">
    <property type="entry name" value="MINI ZINC FINGER PROTEIN 2"/>
    <property type="match status" value="1"/>
</dbReference>
<dbReference type="PANTHER" id="PTHR31948">
    <property type="entry name" value="ZINC-FINGER HOMEODOMAIN PROTEIN 2"/>
    <property type="match status" value="1"/>
</dbReference>
<dbReference type="Pfam" id="PF04770">
    <property type="entry name" value="ZF-HD_dimer"/>
    <property type="match status" value="1"/>
</dbReference>
<dbReference type="PROSITE" id="PS51523">
    <property type="entry name" value="ZF_HD_DIMER"/>
    <property type="match status" value="1"/>
</dbReference>
<protein>
    <recommendedName>
        <fullName>Mini zinc finger protein 2</fullName>
        <shortName>AtMIF2</shortName>
    </recommendedName>
</protein>
<reference key="1">
    <citation type="journal article" date="2000" name="DNA Res.">
        <title>Structural analysis of Arabidopsis thaliana chromosome 3. II. Sequence features of the 4,251,695 bp regions covered by 90 P1, TAC and BAC clones.</title>
        <authorList>
            <person name="Kaneko T."/>
            <person name="Katoh T."/>
            <person name="Sato S."/>
            <person name="Nakamura Y."/>
            <person name="Asamizu E."/>
            <person name="Tabata S."/>
        </authorList>
    </citation>
    <scope>NUCLEOTIDE SEQUENCE [LARGE SCALE GENOMIC DNA]</scope>
    <source>
        <strain>cv. Columbia</strain>
    </source>
</reference>
<reference key="2">
    <citation type="journal article" date="2017" name="Plant J.">
        <title>Araport11: a complete reannotation of the Arabidopsis thaliana reference genome.</title>
        <authorList>
            <person name="Cheng C.Y."/>
            <person name="Krishnakumar V."/>
            <person name="Chan A.P."/>
            <person name="Thibaud-Nissen F."/>
            <person name="Schobel S."/>
            <person name="Town C.D."/>
        </authorList>
    </citation>
    <scope>GENOME REANNOTATION</scope>
    <source>
        <strain>cv. Columbia</strain>
    </source>
</reference>
<reference key="3">
    <citation type="submission" date="2005-03" db="EMBL/GenBank/DDBJ databases">
        <title>Large-scale analysis of RIKEN Arabidopsis full-length (RAFL) cDNAs.</title>
        <authorList>
            <person name="Totoki Y."/>
            <person name="Seki M."/>
            <person name="Ishida J."/>
            <person name="Nakajima M."/>
            <person name="Enju A."/>
            <person name="Kamiya A."/>
            <person name="Narusaka M."/>
            <person name="Shin-i T."/>
            <person name="Nakagawa M."/>
            <person name="Sakamoto N."/>
            <person name="Oishi K."/>
            <person name="Kohara Y."/>
            <person name="Kobayashi M."/>
            <person name="Toyoda A."/>
            <person name="Sakaki Y."/>
            <person name="Sakurai T."/>
            <person name="Iida K."/>
            <person name="Akiyama K."/>
            <person name="Satou M."/>
            <person name="Toyoda T."/>
            <person name="Konagaya A."/>
            <person name="Carninci P."/>
            <person name="Kawai J."/>
            <person name="Hayashizaki Y."/>
            <person name="Shinozaki K."/>
        </authorList>
    </citation>
    <scope>NUCLEOTIDE SEQUENCE [LARGE SCALE MRNA]</scope>
    <source>
        <strain>cv. Columbia</strain>
    </source>
</reference>
<reference key="4">
    <citation type="submission" date="2006-02" db="EMBL/GenBank/DDBJ databases">
        <title>Arabidopsis ORF clones.</title>
        <authorList>
            <person name="Shinn P."/>
            <person name="Chen H."/>
            <person name="Kim C.J."/>
            <person name="Ecker J.R."/>
        </authorList>
    </citation>
    <scope>NUCLEOTIDE SEQUENCE [LARGE SCALE MRNA]</scope>
    <source>
        <strain>cv. Columbia</strain>
    </source>
</reference>
<reference key="5">
    <citation type="submission" date="2002-03" db="EMBL/GenBank/DDBJ databases">
        <title>Full-length cDNA from Arabidopsis thaliana.</title>
        <authorList>
            <person name="Brover V.V."/>
            <person name="Troukhan M.E."/>
            <person name="Alexandrov N.A."/>
            <person name="Lu Y.-P."/>
            <person name="Flavell R.B."/>
            <person name="Feldmann K.A."/>
        </authorList>
    </citation>
    <scope>NUCLEOTIDE SEQUENCE [LARGE SCALE MRNA]</scope>
</reference>
<reference key="6">
    <citation type="journal article" date="2006" name="Plant J.">
        <title>Characterization of a novel putative zinc finger gene MIF1: involvement in multiple hormonal regulation of Arabidopsis development.</title>
        <authorList>
            <person name="Hu W."/>
            <person name="Ma H."/>
        </authorList>
    </citation>
    <scope>TISSUE SPECIFICITY</scope>
</reference>
<reference key="7">
    <citation type="journal article" date="2008" name="J. Integr. Plant Biol.">
        <title>Phylogenetic analysis of the plant-specific zinc finger-homeobox and mini zinc finger gene families.</title>
        <authorList>
            <person name="Hu W."/>
            <person name="dePamphilis C.W."/>
            <person name="Ma H."/>
        </authorList>
    </citation>
    <scope>GENE FAMILY</scope>
    <scope>NOMENCLATURE</scope>
</reference>
<reference key="8">
    <citation type="journal article" date="2011" name="J. Biol. Chem.">
        <title>Nuclear import and DNA binding of the ZHD5 transcription factor is modulated by a competitive peptide inhibitor in Arabidopsis.</title>
        <authorList>
            <person name="Hong S.-Y."/>
            <person name="Kim O.-K."/>
            <person name="Kim S.-G."/>
            <person name="Yang M.-S."/>
            <person name="Park C.-M."/>
        </authorList>
    </citation>
    <scope>INTERACTION WITH ZHD1; ZHD3; ZHD5; ZHD8; ZHD10 AND ZHD13</scope>
    <scope>GENE FAMILY</scope>
    <scope>NOMENCLATURE</scope>
    <source>
        <strain>cv. Columbia</strain>
    </source>
</reference>
<reference key="9">
    <citation type="journal article" date="2011" name="Plant Mol. Biol.">
        <title>Ectopic expression of the Arabidopsis MINI ZINC FINGER1 and MIF3 genes induces shoot meristems on leaf margins.</title>
        <authorList>
            <person name="Hu W."/>
            <person name="Feng B."/>
            <person name="Ma H."/>
        </authorList>
    </citation>
    <scope>FUNCTION</scope>
    <source>
        <strain>cv. Columbia</strain>
    </source>
</reference>
<gene>
    <name type="primary">MIF2</name>
    <name type="ordered locus">At3g28917</name>
    <name type="ORF">MLD15.10</name>
</gene>
<keyword id="KW-0963">Cytoplasm</keyword>
<keyword id="KW-0217">Developmental protein</keyword>
<keyword id="KW-0479">Metal-binding</keyword>
<keyword id="KW-1185">Reference proteome</keyword>
<keyword id="KW-0804">Transcription</keyword>
<keyword id="KW-0805">Transcription regulation</keyword>
<keyword id="KW-0862">Zinc</keyword>
<keyword id="KW-0863">Zinc-finger</keyword>
<comment type="function">
    <text evidence="6">Inhibits zinc finger homeodomain (ZHD) transcription factors by interacting with them to prevent both their nuclear localization and their DNA-binding properties. Involved in integrating signals from multiple hormones by regulating the expression of specific genes.</text>
</comment>
<comment type="subunit">
    <text evidence="1 5">Homo- and heterodimers (By similarity). Interacts with ZHD1, ZHD3, ZHD5, ZHD8, ZHD10 and ZHD13.</text>
</comment>
<comment type="interaction">
    <interactant intactId="EBI-15191779">
        <id>Q9LJW5</id>
    </interactant>
    <interactant intactId="EBI-632272">
        <id>O24410</id>
        <label>IAA20</label>
    </interactant>
    <organismsDiffer>false</organismsDiffer>
    <experiments>3</experiments>
</comment>
<comment type="interaction">
    <interactant intactId="EBI-15191779">
        <id>Q9LJW5</id>
    </interactant>
    <interactant intactId="EBI-4445335">
        <id>Q5XEN5</id>
        <label>MBD1</label>
    </interactant>
    <organismsDiffer>false</organismsDiffer>
    <experiments>4</experiments>
</comment>
<comment type="interaction">
    <interactant intactId="EBI-15191779">
        <id>Q9LJW5</id>
    </interactant>
    <interactant intactId="EBI-1806405">
        <id>Q9LXG0</id>
        <label>ZHD8</label>
    </interactant>
    <organismsDiffer>false</organismsDiffer>
    <experiments>3</experiments>
</comment>
<comment type="subcellular location">
    <subcellularLocation>
        <location evidence="1">Cytoplasm</location>
    </subcellularLocation>
</comment>
<comment type="tissue specificity">
    <text evidence="4">Mostly expressed in stems, flowers and siliques, and, to a lower extent, in inflorescence.</text>
</comment>
<feature type="chain" id="PRO_0000426015" description="Mini zinc finger protein 2">
    <location>
        <begin position="1"/>
        <end position="100"/>
    </location>
</feature>
<feature type="zinc finger region" description="ZF-HD dimerization-type; degenerate" evidence="2">
    <location>
        <begin position="33"/>
        <end position="83"/>
    </location>
</feature>
<feature type="region of interest" description="Disordered" evidence="3">
    <location>
        <begin position="1"/>
        <end position="26"/>
    </location>
</feature>
<sequence>MRKRQVVLRRASPEEPSRSSSTASSLTVRTVRYGECQKNHAAAVGGYAVDGCREFMASRGEEGTVAALTCAACGCHRSFHRREIETEVVCDCNSPPSTGN</sequence>
<name>MIF2_ARATH</name>
<evidence type="ECO:0000250" key="1"/>
<evidence type="ECO:0000255" key="2">
    <source>
        <dbReference type="PROSITE-ProRule" id="PRU00856"/>
    </source>
</evidence>
<evidence type="ECO:0000256" key="3">
    <source>
        <dbReference type="SAM" id="MobiDB-lite"/>
    </source>
</evidence>
<evidence type="ECO:0000269" key="4">
    <source>
    </source>
</evidence>
<evidence type="ECO:0000269" key="5">
    <source>
    </source>
</evidence>
<evidence type="ECO:0000269" key="6">
    <source>
    </source>
</evidence>
<proteinExistence type="evidence at protein level"/>
<organism>
    <name type="scientific">Arabidopsis thaliana</name>
    <name type="common">Mouse-ear cress</name>
    <dbReference type="NCBI Taxonomy" id="3702"/>
    <lineage>
        <taxon>Eukaryota</taxon>
        <taxon>Viridiplantae</taxon>
        <taxon>Streptophyta</taxon>
        <taxon>Embryophyta</taxon>
        <taxon>Tracheophyta</taxon>
        <taxon>Spermatophyta</taxon>
        <taxon>Magnoliopsida</taxon>
        <taxon>eudicotyledons</taxon>
        <taxon>Gunneridae</taxon>
        <taxon>Pentapetalae</taxon>
        <taxon>rosids</taxon>
        <taxon>malvids</taxon>
        <taxon>Brassicales</taxon>
        <taxon>Brassicaceae</taxon>
        <taxon>Camelineae</taxon>
        <taxon>Arabidopsis</taxon>
    </lineage>
</organism>